<evidence type="ECO:0000250" key="1">
    <source>
        <dbReference type="UniProtKB" id="P43577"/>
    </source>
</evidence>
<evidence type="ECO:0000255" key="2"/>
<evidence type="ECO:0000255" key="3">
    <source>
        <dbReference type="PROSITE-ProRule" id="PRU00532"/>
    </source>
</evidence>
<evidence type="ECO:0000305" key="4"/>
<organism>
    <name type="scientific">Schizosaccharomyces pombe (strain 972 / ATCC 24843)</name>
    <name type="common">Fission yeast</name>
    <dbReference type="NCBI Taxonomy" id="284812"/>
    <lineage>
        <taxon>Eukaryota</taxon>
        <taxon>Fungi</taxon>
        <taxon>Dikarya</taxon>
        <taxon>Ascomycota</taxon>
        <taxon>Taphrinomycotina</taxon>
        <taxon>Schizosaccharomycetes</taxon>
        <taxon>Schizosaccharomycetales</taxon>
        <taxon>Schizosaccharomycetaceae</taxon>
        <taxon>Schizosaccharomyces</taxon>
    </lineage>
</organism>
<dbReference type="EC" id="2.3.1.4" evidence="1"/>
<dbReference type="EMBL" id="AB017629">
    <property type="protein sequence ID" value="BAA36498.1"/>
    <property type="molecule type" value="mRNA"/>
</dbReference>
<dbReference type="EMBL" id="CU329670">
    <property type="protein sequence ID" value="CAB11032.1"/>
    <property type="molecule type" value="Genomic_DNA"/>
</dbReference>
<dbReference type="PIR" id="T43426">
    <property type="entry name" value="T43426"/>
</dbReference>
<dbReference type="RefSeq" id="NP_594215.1">
    <property type="nucleotide sequence ID" value="NM_001019638.2"/>
</dbReference>
<dbReference type="SMR" id="O13738"/>
<dbReference type="FunCoup" id="O13738">
    <property type="interactions" value="192"/>
</dbReference>
<dbReference type="STRING" id="284812.O13738"/>
<dbReference type="PaxDb" id="4896-SPAC16E8.03.1"/>
<dbReference type="EnsemblFungi" id="SPAC16E8.03.1">
    <property type="protein sequence ID" value="SPAC16E8.03.1:pep"/>
    <property type="gene ID" value="SPAC16E8.03"/>
</dbReference>
<dbReference type="GeneID" id="2542332"/>
<dbReference type="KEGG" id="spo:2542332"/>
<dbReference type="PomBase" id="SPAC16E8.03">
    <property type="gene designation" value="gna1"/>
</dbReference>
<dbReference type="VEuPathDB" id="FungiDB:SPAC16E8.03"/>
<dbReference type="eggNOG" id="KOG3396">
    <property type="taxonomic scope" value="Eukaryota"/>
</dbReference>
<dbReference type="HOGENOM" id="CLU_072095_3_1_1"/>
<dbReference type="InParanoid" id="O13738"/>
<dbReference type="OMA" id="ESHHVIG"/>
<dbReference type="PhylomeDB" id="O13738"/>
<dbReference type="Reactome" id="R-SPO-446210">
    <property type="pathway name" value="Synthesis of UDP-N-acetyl-glucosamine"/>
</dbReference>
<dbReference type="UniPathway" id="UPA00113">
    <property type="reaction ID" value="UER00529"/>
</dbReference>
<dbReference type="PRO" id="PR:O13738"/>
<dbReference type="Proteomes" id="UP000002485">
    <property type="component" value="Chromosome I"/>
</dbReference>
<dbReference type="GO" id="GO:0005829">
    <property type="term" value="C:cytosol"/>
    <property type="evidence" value="ECO:0007005"/>
    <property type="project" value="PomBase"/>
</dbReference>
<dbReference type="GO" id="GO:0005634">
    <property type="term" value="C:nucleus"/>
    <property type="evidence" value="ECO:0007005"/>
    <property type="project" value="PomBase"/>
</dbReference>
<dbReference type="GO" id="GO:0004343">
    <property type="term" value="F:glucosamine 6-phosphate N-acetyltransferase activity"/>
    <property type="evidence" value="ECO:0000318"/>
    <property type="project" value="GO_Central"/>
</dbReference>
<dbReference type="GO" id="GO:0006048">
    <property type="term" value="P:UDP-N-acetylglucosamine biosynthetic process"/>
    <property type="evidence" value="ECO:0000250"/>
    <property type="project" value="PomBase"/>
</dbReference>
<dbReference type="CDD" id="cd04301">
    <property type="entry name" value="NAT_SF"/>
    <property type="match status" value="1"/>
</dbReference>
<dbReference type="FunFam" id="3.40.630.30:FF:000511">
    <property type="entry name" value="Glucosamine 6-phosphate N-acetyltransferase"/>
    <property type="match status" value="1"/>
</dbReference>
<dbReference type="Gene3D" id="3.40.630.30">
    <property type="match status" value="1"/>
</dbReference>
<dbReference type="InterPro" id="IPR016181">
    <property type="entry name" value="Acyl_CoA_acyltransferase"/>
</dbReference>
<dbReference type="InterPro" id="IPR000182">
    <property type="entry name" value="GNAT_dom"/>
</dbReference>
<dbReference type="InterPro" id="IPR039143">
    <property type="entry name" value="GNPNAT1-like"/>
</dbReference>
<dbReference type="PANTHER" id="PTHR13355">
    <property type="entry name" value="GLUCOSAMINE 6-PHOSPHATE N-ACETYLTRANSFERASE"/>
    <property type="match status" value="1"/>
</dbReference>
<dbReference type="PANTHER" id="PTHR13355:SF11">
    <property type="entry name" value="GLUCOSAMINE 6-PHOSPHATE N-ACETYLTRANSFERASE"/>
    <property type="match status" value="1"/>
</dbReference>
<dbReference type="Pfam" id="PF00583">
    <property type="entry name" value="Acetyltransf_1"/>
    <property type="match status" value="1"/>
</dbReference>
<dbReference type="SUPFAM" id="SSF55729">
    <property type="entry name" value="Acyl-CoA N-acyltransferases (Nat)"/>
    <property type="match status" value="1"/>
</dbReference>
<dbReference type="PROSITE" id="PS51186">
    <property type="entry name" value="GNAT"/>
    <property type="match status" value="1"/>
</dbReference>
<accession>O13738</accession>
<reference key="1">
    <citation type="journal article" date="1999" name="J. Biol. Chem.">
        <title>Saccharomyces cerevisiae GNA1, an essential gene encoding a novel acetyltransferase involved in UDP-N-acetylglucosamine synthesis.</title>
        <authorList>
            <person name="Mio T."/>
            <person name="Yamada-Okabe T."/>
            <person name="Arisawa M."/>
            <person name="Yamada-Okabe H."/>
        </authorList>
    </citation>
    <scope>NUCLEOTIDE SEQUENCE [MRNA]</scope>
    <scope>IDENTIFICATION</scope>
</reference>
<reference key="2">
    <citation type="journal article" date="2002" name="Nature">
        <title>The genome sequence of Schizosaccharomyces pombe.</title>
        <authorList>
            <person name="Wood V."/>
            <person name="Gwilliam R."/>
            <person name="Rajandream M.A."/>
            <person name="Lyne M.H."/>
            <person name="Lyne R."/>
            <person name="Stewart A."/>
            <person name="Sgouros J.G."/>
            <person name="Peat N."/>
            <person name="Hayles J."/>
            <person name="Baker S.G."/>
            <person name="Basham D."/>
            <person name="Bowman S."/>
            <person name="Brooks K."/>
            <person name="Brown D."/>
            <person name="Brown S."/>
            <person name="Chillingworth T."/>
            <person name="Churcher C.M."/>
            <person name="Collins M."/>
            <person name="Connor R."/>
            <person name="Cronin A."/>
            <person name="Davis P."/>
            <person name="Feltwell T."/>
            <person name="Fraser A."/>
            <person name="Gentles S."/>
            <person name="Goble A."/>
            <person name="Hamlin N."/>
            <person name="Harris D.E."/>
            <person name="Hidalgo J."/>
            <person name="Hodgson G."/>
            <person name="Holroyd S."/>
            <person name="Hornsby T."/>
            <person name="Howarth S."/>
            <person name="Huckle E.J."/>
            <person name="Hunt S."/>
            <person name="Jagels K."/>
            <person name="James K.D."/>
            <person name="Jones L."/>
            <person name="Jones M."/>
            <person name="Leather S."/>
            <person name="McDonald S."/>
            <person name="McLean J."/>
            <person name="Mooney P."/>
            <person name="Moule S."/>
            <person name="Mungall K.L."/>
            <person name="Murphy L.D."/>
            <person name="Niblett D."/>
            <person name="Odell C."/>
            <person name="Oliver K."/>
            <person name="O'Neil S."/>
            <person name="Pearson D."/>
            <person name="Quail M.A."/>
            <person name="Rabbinowitsch E."/>
            <person name="Rutherford K.M."/>
            <person name="Rutter S."/>
            <person name="Saunders D."/>
            <person name="Seeger K."/>
            <person name="Sharp S."/>
            <person name="Skelton J."/>
            <person name="Simmonds M.N."/>
            <person name="Squares R."/>
            <person name="Squares S."/>
            <person name="Stevens K."/>
            <person name="Taylor K."/>
            <person name="Taylor R.G."/>
            <person name="Tivey A."/>
            <person name="Walsh S.V."/>
            <person name="Warren T."/>
            <person name="Whitehead S."/>
            <person name="Woodward J.R."/>
            <person name="Volckaert G."/>
            <person name="Aert R."/>
            <person name="Robben J."/>
            <person name="Grymonprez B."/>
            <person name="Weltjens I."/>
            <person name="Vanstreels E."/>
            <person name="Rieger M."/>
            <person name="Schaefer M."/>
            <person name="Mueller-Auer S."/>
            <person name="Gabel C."/>
            <person name="Fuchs M."/>
            <person name="Duesterhoeft A."/>
            <person name="Fritzc C."/>
            <person name="Holzer E."/>
            <person name="Moestl D."/>
            <person name="Hilbert H."/>
            <person name="Borzym K."/>
            <person name="Langer I."/>
            <person name="Beck A."/>
            <person name="Lehrach H."/>
            <person name="Reinhardt R."/>
            <person name="Pohl T.M."/>
            <person name="Eger P."/>
            <person name="Zimmermann W."/>
            <person name="Wedler H."/>
            <person name="Wambutt R."/>
            <person name="Purnelle B."/>
            <person name="Goffeau A."/>
            <person name="Cadieu E."/>
            <person name="Dreano S."/>
            <person name="Gloux S."/>
            <person name="Lelaure V."/>
            <person name="Mottier S."/>
            <person name="Galibert F."/>
            <person name="Aves S.J."/>
            <person name="Xiang Z."/>
            <person name="Hunt C."/>
            <person name="Moore K."/>
            <person name="Hurst S.M."/>
            <person name="Lucas M."/>
            <person name="Rochet M."/>
            <person name="Gaillardin C."/>
            <person name="Tallada V.A."/>
            <person name="Garzon A."/>
            <person name="Thode G."/>
            <person name="Daga R.R."/>
            <person name="Cruzado L."/>
            <person name="Jimenez J."/>
            <person name="Sanchez M."/>
            <person name="del Rey F."/>
            <person name="Benito J."/>
            <person name="Dominguez A."/>
            <person name="Revuelta J.L."/>
            <person name="Moreno S."/>
            <person name="Armstrong J."/>
            <person name="Forsburg S.L."/>
            <person name="Cerutti L."/>
            <person name="Lowe T."/>
            <person name="McCombie W.R."/>
            <person name="Paulsen I."/>
            <person name="Potashkin J."/>
            <person name="Shpakovski G.V."/>
            <person name="Ussery D."/>
            <person name="Barrell B.G."/>
            <person name="Nurse P."/>
        </authorList>
    </citation>
    <scope>NUCLEOTIDE SEQUENCE [LARGE SCALE GENOMIC DNA]</scope>
    <source>
        <strain>972 / ATCC 24843</strain>
    </source>
</reference>
<proteinExistence type="inferred from homology"/>
<name>GNA1_SCHPO</name>
<feature type="chain" id="PRO_0000074558" description="Glucosamine 6-phosphate N-acetyltransferase">
    <location>
        <begin position="1"/>
        <end position="111"/>
    </location>
</feature>
<feature type="domain" description="N-acetyltransferase" evidence="3">
    <location>
        <begin position="1"/>
        <end position="111"/>
    </location>
</feature>
<feature type="binding site" evidence="1">
    <location>
        <begin position="33"/>
        <end position="36"/>
    </location>
    <ligand>
        <name>substrate</name>
    </ligand>
</feature>
<feature type="binding site" evidence="1">
    <location>
        <begin position="45"/>
        <end position="47"/>
    </location>
    <ligand>
        <name>substrate</name>
    </ligand>
</feature>
<feature type="binding site" evidence="1">
    <location>
        <begin position="47"/>
        <end position="49"/>
    </location>
    <ligand>
        <name>acetyl-CoA</name>
        <dbReference type="ChEBI" id="CHEBI:57288"/>
    </ligand>
</feature>
<feature type="binding site" evidence="2">
    <location>
        <begin position="55"/>
        <end position="60"/>
    </location>
    <ligand>
        <name>acetyl-CoA</name>
        <dbReference type="ChEBI" id="CHEBI:57288"/>
    </ligand>
</feature>
<feature type="binding site" evidence="1">
    <location>
        <begin position="76"/>
        <end position="77"/>
    </location>
    <ligand>
        <name>substrate</name>
    </ligand>
</feature>
<feature type="binding site" evidence="1">
    <location>
        <position position="81"/>
    </location>
    <ligand>
        <name>substrate</name>
    </ligand>
</feature>
<feature type="binding site" evidence="1">
    <location>
        <begin position="90"/>
        <end position="92"/>
    </location>
    <ligand>
        <name>acetyl-CoA</name>
        <dbReference type="ChEBI" id="CHEBI:57288"/>
    </ligand>
</feature>
<keyword id="KW-0012">Acyltransferase</keyword>
<keyword id="KW-1185">Reference proteome</keyword>
<keyword id="KW-0808">Transferase</keyword>
<comment type="catalytic activity">
    <reaction evidence="1">
        <text>D-glucosamine 6-phosphate + acetyl-CoA = N-acetyl-D-glucosamine 6-phosphate + CoA + H(+)</text>
        <dbReference type="Rhea" id="RHEA:10292"/>
        <dbReference type="ChEBI" id="CHEBI:15378"/>
        <dbReference type="ChEBI" id="CHEBI:57287"/>
        <dbReference type="ChEBI" id="CHEBI:57288"/>
        <dbReference type="ChEBI" id="CHEBI:57513"/>
        <dbReference type="ChEBI" id="CHEBI:58725"/>
        <dbReference type="EC" id="2.3.1.4"/>
    </reaction>
</comment>
<comment type="pathway">
    <text>Nucleotide-sugar biosynthesis; UDP-N-acetyl-alpha-D-glucosamine biosynthesis; N-acetyl-alpha-D-glucosamine 1-phosphate from alpha-D-glucosamine 6-phosphate (route I): step 1/2.</text>
</comment>
<comment type="similarity">
    <text evidence="4">Belongs to the acetyltransferase family. GNA1 subfamily.</text>
</comment>
<sequence length="111" mass="12596">MKKDFHSTYYIIVVEDLESHHVIGTATLFLERKFLRGKGICGHIEEVIVHPDHQRKAIGKLMVLTLIKLAFSLNSYKVILDCSDSNVGFYEKCGLSRAGIEMKKYASHSII</sequence>
<protein>
    <recommendedName>
        <fullName>Glucosamine 6-phosphate N-acetyltransferase</fullName>
        <ecNumber evidence="1">2.3.1.4</ecNumber>
    </recommendedName>
    <alternativeName>
        <fullName>Phosphoglucosamine acetylase</fullName>
    </alternativeName>
    <alternativeName>
        <fullName>Phosphoglucosamine transacetylase</fullName>
    </alternativeName>
</protein>
<gene>
    <name type="primary">gna1</name>
    <name type="ORF">SPAC16E8.03</name>
</gene>